<evidence type="ECO:0000250" key="1">
    <source>
        <dbReference type="UniProtKB" id="P82617"/>
    </source>
</evidence>
<evidence type="ECO:0000255" key="2"/>
<evidence type="ECO:0000269" key="3">
    <source>
    </source>
</evidence>
<evidence type="ECO:0000303" key="4">
    <source>
    </source>
</evidence>
<evidence type="ECO:0000305" key="5"/>
<sequence length="17" mass="1900">FGETSGETKGMWFGPRL</sequence>
<protein>
    <recommendedName>
        <fullName evidence="1">Pyrokinin-5</fullName>
    </recommendedName>
    <alternativeName>
        <fullName evidence="1">FXPRL-amide</fullName>
    </alternativeName>
    <alternativeName>
        <fullName evidence="4">PriVa-Capa-PK</fullName>
    </alternativeName>
</protein>
<feature type="peptide" id="PRO_0000378719" description="Pyrokinin-5" evidence="3">
    <location>
        <begin position="1"/>
        <end position="17"/>
    </location>
</feature>
<feature type="modified residue" description="Leucine amide" evidence="3">
    <location>
        <position position="17"/>
    </location>
</feature>
<name>PPK5_PRIVA</name>
<accession>P85747</accession>
<organism>
    <name type="scientific">Princisia vanwaerebeki</name>
    <name type="common">Tiger hisser roach</name>
    <dbReference type="NCBI Taxonomy" id="1661849"/>
    <lineage>
        <taxon>Eukaryota</taxon>
        <taxon>Metazoa</taxon>
        <taxon>Ecdysozoa</taxon>
        <taxon>Arthropoda</taxon>
        <taxon>Hexapoda</taxon>
        <taxon>Insecta</taxon>
        <taxon>Pterygota</taxon>
        <taxon>Neoptera</taxon>
        <taxon>Polyneoptera</taxon>
        <taxon>Dictyoptera</taxon>
        <taxon>Blattodea</taxon>
        <taxon>Blaberoidea</taxon>
        <taxon>Blaberidae</taxon>
        <taxon>Oxyhaloinae</taxon>
        <taxon>Princisia</taxon>
    </lineage>
</organism>
<comment type="function">
    <text evidence="1">Myoactive.</text>
</comment>
<comment type="subcellular location">
    <subcellularLocation>
        <location evidence="5">Secreted</location>
    </subcellularLocation>
</comment>
<comment type="similarity">
    <text evidence="2">Belongs to the pyrokinin family.</text>
</comment>
<keyword id="KW-0027">Amidation</keyword>
<keyword id="KW-0903">Direct protein sequencing</keyword>
<keyword id="KW-0527">Neuropeptide</keyword>
<keyword id="KW-0964">Secreted</keyword>
<dbReference type="GO" id="GO:0005576">
    <property type="term" value="C:extracellular region"/>
    <property type="evidence" value="ECO:0007669"/>
    <property type="project" value="UniProtKB-SubCell"/>
</dbReference>
<dbReference type="GO" id="GO:0005184">
    <property type="term" value="F:neuropeptide hormone activity"/>
    <property type="evidence" value="ECO:0007669"/>
    <property type="project" value="InterPro"/>
</dbReference>
<dbReference type="GO" id="GO:0007218">
    <property type="term" value="P:neuropeptide signaling pathway"/>
    <property type="evidence" value="ECO:0007669"/>
    <property type="project" value="UniProtKB-KW"/>
</dbReference>
<dbReference type="InterPro" id="IPR001484">
    <property type="entry name" value="Pyrokinin_CS"/>
</dbReference>
<dbReference type="PROSITE" id="PS00539">
    <property type="entry name" value="PYROKININ"/>
    <property type="match status" value="1"/>
</dbReference>
<reference evidence="5" key="1">
    <citation type="journal article" date="2009" name="BMC Evol. Biol.">
        <title>A proteomic approach for studying insect phylogeny: CAPA peptides of ancient insect taxa (Dictyoptera, Blattoptera) as a test case.</title>
        <authorList>
            <person name="Roth S."/>
            <person name="Fromm B."/>
            <person name="Gaede G."/>
            <person name="Predel R."/>
        </authorList>
    </citation>
    <scope>PROTEIN SEQUENCE</scope>
    <scope>AMIDATION AT LEU-17</scope>
    <source>
        <tissue evidence="3">Abdominal perisympathetic organs</tissue>
    </source>
</reference>
<proteinExistence type="evidence at protein level"/>